<sequence length="202" mass="22358">MKALTARQQEVFDLIRDHISQTGMPPTRAEIAQRLGFRSPNAAEEHLKALARKGVIEIVSGASRGIRLLQEEEEGLPLVGRVAAGEPLLAQQHIEGHYQVDPSLFKPNADFLLRVSGMSMKDIGIMDGDLLAVHKTQDVRNGQVVVARIDDEVTVKRLKKQGNKVELLPENSEFKPIVVDLRQQSFTIEGLAVGVIRNGDWL</sequence>
<keyword id="KW-0068">Autocatalytic cleavage</keyword>
<keyword id="KW-0227">DNA damage</keyword>
<keyword id="KW-0234">DNA repair</keyword>
<keyword id="KW-0235">DNA replication</keyword>
<keyword id="KW-0238">DNA-binding</keyword>
<keyword id="KW-0378">Hydrolase</keyword>
<keyword id="KW-0678">Repressor</keyword>
<keyword id="KW-0742">SOS response</keyword>
<keyword id="KW-0804">Transcription</keyword>
<keyword id="KW-0805">Transcription regulation</keyword>
<organism>
    <name type="scientific">Escherichia coli (strain SMS-3-5 / SECEC)</name>
    <dbReference type="NCBI Taxonomy" id="439855"/>
    <lineage>
        <taxon>Bacteria</taxon>
        <taxon>Pseudomonadati</taxon>
        <taxon>Pseudomonadota</taxon>
        <taxon>Gammaproteobacteria</taxon>
        <taxon>Enterobacterales</taxon>
        <taxon>Enterobacteriaceae</taxon>
        <taxon>Escherichia</taxon>
    </lineage>
</organism>
<gene>
    <name evidence="1" type="primary">lexA</name>
    <name type="ordered locus">EcSMS35_4505</name>
</gene>
<reference key="1">
    <citation type="journal article" date="2008" name="J. Bacteriol.">
        <title>Insights into the environmental resistance gene pool from the genome sequence of the multidrug-resistant environmental isolate Escherichia coli SMS-3-5.</title>
        <authorList>
            <person name="Fricke W.F."/>
            <person name="Wright M.S."/>
            <person name="Lindell A.H."/>
            <person name="Harkins D.M."/>
            <person name="Baker-Austin C."/>
            <person name="Ravel J."/>
            <person name="Stepanauskas R."/>
        </authorList>
    </citation>
    <scope>NUCLEOTIDE SEQUENCE [LARGE SCALE GENOMIC DNA]</scope>
    <source>
        <strain>SMS-3-5 / SECEC</strain>
    </source>
</reference>
<proteinExistence type="inferred from homology"/>
<name>LEXA_ECOSM</name>
<dbReference type="EC" id="3.4.21.88" evidence="1"/>
<dbReference type="EMBL" id="CP000970">
    <property type="protein sequence ID" value="ACB20142.1"/>
    <property type="molecule type" value="Genomic_DNA"/>
</dbReference>
<dbReference type="RefSeq" id="WP_000646078.1">
    <property type="nucleotide sequence ID" value="NC_010498.1"/>
</dbReference>
<dbReference type="SMR" id="B1LPK8"/>
<dbReference type="MEROPS" id="S24.001"/>
<dbReference type="GeneID" id="93777788"/>
<dbReference type="KEGG" id="ecm:EcSMS35_4505"/>
<dbReference type="HOGENOM" id="CLU_066192_45_3_6"/>
<dbReference type="Proteomes" id="UP000007011">
    <property type="component" value="Chromosome"/>
</dbReference>
<dbReference type="GO" id="GO:0003677">
    <property type="term" value="F:DNA binding"/>
    <property type="evidence" value="ECO:0007669"/>
    <property type="project" value="UniProtKB-UniRule"/>
</dbReference>
<dbReference type="GO" id="GO:0004252">
    <property type="term" value="F:serine-type endopeptidase activity"/>
    <property type="evidence" value="ECO:0007669"/>
    <property type="project" value="UniProtKB-UniRule"/>
</dbReference>
<dbReference type="GO" id="GO:0006281">
    <property type="term" value="P:DNA repair"/>
    <property type="evidence" value="ECO:0007669"/>
    <property type="project" value="UniProtKB-UniRule"/>
</dbReference>
<dbReference type="GO" id="GO:0006260">
    <property type="term" value="P:DNA replication"/>
    <property type="evidence" value="ECO:0007669"/>
    <property type="project" value="UniProtKB-UniRule"/>
</dbReference>
<dbReference type="GO" id="GO:0045892">
    <property type="term" value="P:negative regulation of DNA-templated transcription"/>
    <property type="evidence" value="ECO:0007669"/>
    <property type="project" value="UniProtKB-UniRule"/>
</dbReference>
<dbReference type="GO" id="GO:0006508">
    <property type="term" value="P:proteolysis"/>
    <property type="evidence" value="ECO:0007669"/>
    <property type="project" value="InterPro"/>
</dbReference>
<dbReference type="GO" id="GO:0009432">
    <property type="term" value="P:SOS response"/>
    <property type="evidence" value="ECO:0007669"/>
    <property type="project" value="UniProtKB-UniRule"/>
</dbReference>
<dbReference type="CDD" id="cd06529">
    <property type="entry name" value="S24_LexA-like"/>
    <property type="match status" value="1"/>
</dbReference>
<dbReference type="FunFam" id="1.10.10.10:FF:000009">
    <property type="entry name" value="LexA repressor"/>
    <property type="match status" value="1"/>
</dbReference>
<dbReference type="FunFam" id="2.10.109.10:FF:000001">
    <property type="entry name" value="LexA repressor"/>
    <property type="match status" value="1"/>
</dbReference>
<dbReference type="Gene3D" id="2.10.109.10">
    <property type="entry name" value="Umud Fragment, subunit A"/>
    <property type="match status" value="1"/>
</dbReference>
<dbReference type="Gene3D" id="1.10.10.10">
    <property type="entry name" value="Winged helix-like DNA-binding domain superfamily/Winged helix DNA-binding domain"/>
    <property type="match status" value="1"/>
</dbReference>
<dbReference type="HAMAP" id="MF_00015">
    <property type="entry name" value="LexA"/>
    <property type="match status" value="1"/>
</dbReference>
<dbReference type="InterPro" id="IPR006200">
    <property type="entry name" value="LexA"/>
</dbReference>
<dbReference type="InterPro" id="IPR039418">
    <property type="entry name" value="LexA-like"/>
</dbReference>
<dbReference type="InterPro" id="IPR036286">
    <property type="entry name" value="LexA/Signal_pep-like_sf"/>
</dbReference>
<dbReference type="InterPro" id="IPR006199">
    <property type="entry name" value="LexA_DNA-bd_dom"/>
</dbReference>
<dbReference type="InterPro" id="IPR050077">
    <property type="entry name" value="LexA_repressor"/>
</dbReference>
<dbReference type="InterPro" id="IPR006197">
    <property type="entry name" value="Peptidase_S24_LexA"/>
</dbReference>
<dbReference type="InterPro" id="IPR015927">
    <property type="entry name" value="Peptidase_S24_S26A/B/C"/>
</dbReference>
<dbReference type="InterPro" id="IPR036388">
    <property type="entry name" value="WH-like_DNA-bd_sf"/>
</dbReference>
<dbReference type="InterPro" id="IPR036390">
    <property type="entry name" value="WH_DNA-bd_sf"/>
</dbReference>
<dbReference type="NCBIfam" id="TIGR00498">
    <property type="entry name" value="lexA"/>
    <property type="match status" value="1"/>
</dbReference>
<dbReference type="PANTHER" id="PTHR33516">
    <property type="entry name" value="LEXA REPRESSOR"/>
    <property type="match status" value="1"/>
</dbReference>
<dbReference type="PANTHER" id="PTHR33516:SF2">
    <property type="entry name" value="LEXA REPRESSOR-RELATED"/>
    <property type="match status" value="1"/>
</dbReference>
<dbReference type="Pfam" id="PF01726">
    <property type="entry name" value="LexA_DNA_bind"/>
    <property type="match status" value="1"/>
</dbReference>
<dbReference type="Pfam" id="PF00717">
    <property type="entry name" value="Peptidase_S24"/>
    <property type="match status" value="1"/>
</dbReference>
<dbReference type="PRINTS" id="PR00726">
    <property type="entry name" value="LEXASERPTASE"/>
</dbReference>
<dbReference type="SUPFAM" id="SSF51306">
    <property type="entry name" value="LexA/Signal peptidase"/>
    <property type="match status" value="1"/>
</dbReference>
<dbReference type="SUPFAM" id="SSF46785">
    <property type="entry name" value="Winged helix' DNA-binding domain"/>
    <property type="match status" value="1"/>
</dbReference>
<evidence type="ECO:0000255" key="1">
    <source>
        <dbReference type="HAMAP-Rule" id="MF_00015"/>
    </source>
</evidence>
<feature type="chain" id="PRO_1000192765" description="LexA repressor">
    <location>
        <begin position="1"/>
        <end position="202"/>
    </location>
</feature>
<feature type="DNA-binding region" description="H-T-H motif" evidence="1">
    <location>
        <begin position="28"/>
        <end position="48"/>
    </location>
</feature>
<feature type="active site" description="For autocatalytic cleavage activity" evidence="1">
    <location>
        <position position="119"/>
    </location>
</feature>
<feature type="active site" description="For autocatalytic cleavage activity" evidence="1">
    <location>
        <position position="156"/>
    </location>
</feature>
<feature type="site" description="Cleavage; by autolysis" evidence="1">
    <location>
        <begin position="84"/>
        <end position="85"/>
    </location>
</feature>
<comment type="function">
    <text evidence="1">Represses a number of genes involved in the response to DNA damage (SOS response), including recA and lexA. Binds to the 16 bp palindromic sequence 5'-CTGTATATATATACAG-3'. In the presence of single-stranded DNA, RecA interacts with LexA causing an autocatalytic cleavage which disrupts the DNA-binding part of LexA, leading to derepression of the SOS regulon and eventually DNA repair.</text>
</comment>
<comment type="catalytic activity">
    <reaction evidence="1">
        <text>Hydrolysis of Ala-|-Gly bond in repressor LexA.</text>
        <dbReference type="EC" id="3.4.21.88"/>
    </reaction>
</comment>
<comment type="subunit">
    <text evidence="1">Homodimer.</text>
</comment>
<comment type="similarity">
    <text evidence="1">Belongs to the peptidase S24 family.</text>
</comment>
<accession>B1LPK8</accession>
<protein>
    <recommendedName>
        <fullName evidence="1">LexA repressor</fullName>
        <ecNumber evidence="1">3.4.21.88</ecNumber>
    </recommendedName>
</protein>